<proteinExistence type="inferred from homology"/>
<evidence type="ECO:0000255" key="1">
    <source>
        <dbReference type="HAMAP-Rule" id="MF_03144"/>
    </source>
</evidence>
<keyword id="KW-0342">GTP-binding</keyword>
<keyword id="KW-0436">Ligase</keyword>
<keyword id="KW-0464">Manganese</keyword>
<keyword id="KW-0479">Metal-binding</keyword>
<keyword id="KW-0547">Nucleotide-binding</keyword>
<keyword id="KW-1185">Reference proteome</keyword>
<keyword id="KW-0819">tRNA processing</keyword>
<reference key="1">
    <citation type="journal article" date="2008" name="Nature">
        <title>The genome of the simian and human malaria parasite Plasmodium knowlesi.</title>
        <authorList>
            <person name="Pain A."/>
            <person name="Boehme U."/>
            <person name="Berry A.E."/>
            <person name="Mungall K."/>
            <person name="Finn R.D."/>
            <person name="Jackson A.P."/>
            <person name="Mourier T."/>
            <person name="Mistry J."/>
            <person name="Pasini E.M."/>
            <person name="Aslett M.A."/>
            <person name="Balasubrammaniam S."/>
            <person name="Borgwardt K."/>
            <person name="Brooks K."/>
            <person name="Carret C."/>
            <person name="Carver T.J."/>
            <person name="Cherevach I."/>
            <person name="Chillingworth T."/>
            <person name="Clark T.G."/>
            <person name="Galinski M.R."/>
            <person name="Hall N."/>
            <person name="Harper D."/>
            <person name="Harris D."/>
            <person name="Hauser H."/>
            <person name="Ivens A."/>
            <person name="Janssen C.S."/>
            <person name="Keane T."/>
            <person name="Larke N."/>
            <person name="Lapp S."/>
            <person name="Marti M."/>
            <person name="Moule S."/>
            <person name="Meyer I.M."/>
            <person name="Ormond D."/>
            <person name="Peters N."/>
            <person name="Sanders M."/>
            <person name="Sanders S."/>
            <person name="Sargeant T.J."/>
            <person name="Simmonds M."/>
            <person name="Smith F."/>
            <person name="Squares R."/>
            <person name="Thurston S."/>
            <person name="Tivey A.R."/>
            <person name="Walker D."/>
            <person name="White B."/>
            <person name="Zuiderwijk E."/>
            <person name="Churcher C."/>
            <person name="Quail M.A."/>
            <person name="Cowman A.F."/>
            <person name="Turner C.M.R."/>
            <person name="Rajandream M.A."/>
            <person name="Kocken C.H.M."/>
            <person name="Thomas A.W."/>
            <person name="Newbold C.I."/>
            <person name="Barrell B.G."/>
            <person name="Berriman M."/>
        </authorList>
    </citation>
    <scope>NUCLEOTIDE SEQUENCE [LARGE SCALE GENOMIC DNA]</scope>
    <source>
        <strain>H</strain>
    </source>
</reference>
<protein>
    <recommendedName>
        <fullName evidence="1">RNA-splicing ligase RtcB homolog</fullName>
        <ecNumber evidence="1">6.5.1.8</ecNumber>
    </recommendedName>
    <alternativeName>
        <fullName evidence="1">3'-phosphate/5'-hydroxy nucleic acid ligase</fullName>
    </alternativeName>
</protein>
<comment type="function">
    <text evidence="1">Catalytic subunit of the tRNA-splicing ligase complex that acts by directly joining spliced tRNA halves to mature-sized tRNAs by incorporating the precursor-derived splice junction phosphate into the mature tRNA as a canonical 3',5'-phosphodiester. May act as an RNA ligase with broad substrate specificity, and may function toward other RNAs.</text>
</comment>
<comment type="catalytic activity">
    <reaction evidence="1">
        <text>a 3'-end 3'-phospho-ribonucleotide-RNA + a 5'-end dephospho-ribonucleoside-RNA + GTP = a ribonucleotidyl-ribonucleotide-RNA + GMP + diphosphate</text>
        <dbReference type="Rhea" id="RHEA:68076"/>
        <dbReference type="Rhea" id="RHEA-COMP:10463"/>
        <dbReference type="Rhea" id="RHEA-COMP:13936"/>
        <dbReference type="Rhea" id="RHEA-COMP:17355"/>
        <dbReference type="ChEBI" id="CHEBI:33019"/>
        <dbReference type="ChEBI" id="CHEBI:37565"/>
        <dbReference type="ChEBI" id="CHEBI:58115"/>
        <dbReference type="ChEBI" id="CHEBI:83062"/>
        <dbReference type="ChEBI" id="CHEBI:138284"/>
        <dbReference type="ChEBI" id="CHEBI:173118"/>
        <dbReference type="EC" id="6.5.1.8"/>
    </reaction>
</comment>
<comment type="catalytic activity">
    <reaction evidence="1">
        <text>a 3'-end 2',3'-cyclophospho-ribonucleotide-RNA + a 5'-end dephospho-ribonucleoside-RNA + GTP + H2O = a ribonucleotidyl-ribonucleotide-RNA + GMP + diphosphate + H(+)</text>
        <dbReference type="Rhea" id="RHEA:68080"/>
        <dbReference type="Rhea" id="RHEA-COMP:10464"/>
        <dbReference type="Rhea" id="RHEA-COMP:13936"/>
        <dbReference type="Rhea" id="RHEA-COMP:17355"/>
        <dbReference type="ChEBI" id="CHEBI:15377"/>
        <dbReference type="ChEBI" id="CHEBI:15378"/>
        <dbReference type="ChEBI" id="CHEBI:33019"/>
        <dbReference type="ChEBI" id="CHEBI:37565"/>
        <dbReference type="ChEBI" id="CHEBI:58115"/>
        <dbReference type="ChEBI" id="CHEBI:83064"/>
        <dbReference type="ChEBI" id="CHEBI:138284"/>
        <dbReference type="ChEBI" id="CHEBI:173118"/>
        <dbReference type="EC" id="6.5.1.8"/>
    </reaction>
</comment>
<comment type="cofactor">
    <cofactor evidence="1">
        <name>Mn(2+)</name>
        <dbReference type="ChEBI" id="CHEBI:29035"/>
    </cofactor>
    <text evidence="1">Binds 2 manganese ions per subunit.</text>
</comment>
<comment type="subunit">
    <text evidence="1">Catalytic component of the tRNA-splicing ligase complex.</text>
</comment>
<comment type="miscellaneous">
    <text evidence="1">Ligation probably proceeds through 3 nucleotidyl transfer steps, with 2',3'-cyclic phosphate termini being hydrolyzed to 3'-P termini in a step that precedes 3'-P activation with GMP. In the first nucleotidyl transfer step, RTCB reacts with GTP to form a covalent RTCB-histidine-GMP intermediate with release of PPi; in the second step, the GMP moiety is transferred to the RNA 3'-P; in the third step, the 5'-OH from the opposite RNA strand attacks the activated 3'-P to form a 3',5'-phosphodiester bond and release GMP.</text>
</comment>
<comment type="similarity">
    <text evidence="1">Belongs to the RtcB family.</text>
</comment>
<dbReference type="EC" id="6.5.1.8" evidence="1"/>
<dbReference type="EMBL" id="AM910991">
    <property type="protein sequence ID" value="CAQ39830.1"/>
    <property type="molecule type" value="Genomic_DNA"/>
</dbReference>
<dbReference type="RefSeq" id="XP_002259057.1">
    <property type="nucleotide sequence ID" value="XM_002259021.1"/>
</dbReference>
<dbReference type="SMR" id="B3L4K9"/>
<dbReference type="FunCoup" id="B3L4K9">
    <property type="interactions" value="269"/>
</dbReference>
<dbReference type="STRING" id="5851.B3L4K9"/>
<dbReference type="EnsemblProtists" id="CAQ39830">
    <property type="protein sequence ID" value="CAQ39830"/>
    <property type="gene ID" value="PKH_090290"/>
</dbReference>
<dbReference type="GeneID" id="7320774"/>
<dbReference type="KEGG" id="pkn:PKNH_0903300"/>
<dbReference type="VEuPathDB" id="PlasmoDB:PKNH_0903300"/>
<dbReference type="HOGENOM" id="CLU_022279_0_0_1"/>
<dbReference type="InParanoid" id="B3L4K9"/>
<dbReference type="OMA" id="QTRGVEC"/>
<dbReference type="OrthoDB" id="10249697at2759"/>
<dbReference type="PhylomeDB" id="B3L4K9"/>
<dbReference type="Proteomes" id="UP000031513">
    <property type="component" value="Chromosome 9"/>
</dbReference>
<dbReference type="GO" id="GO:0005634">
    <property type="term" value="C:nucleus"/>
    <property type="evidence" value="ECO:0007669"/>
    <property type="project" value="TreeGrafter"/>
</dbReference>
<dbReference type="GO" id="GO:0072669">
    <property type="term" value="C:tRNA-splicing ligase complex"/>
    <property type="evidence" value="ECO:0007669"/>
    <property type="project" value="UniProtKB-UniRule"/>
</dbReference>
<dbReference type="GO" id="GO:0005525">
    <property type="term" value="F:GTP binding"/>
    <property type="evidence" value="ECO:0007669"/>
    <property type="project" value="UniProtKB-KW"/>
</dbReference>
<dbReference type="GO" id="GO:0046872">
    <property type="term" value="F:metal ion binding"/>
    <property type="evidence" value="ECO:0007669"/>
    <property type="project" value="UniProtKB-KW"/>
</dbReference>
<dbReference type="GO" id="GO:0003972">
    <property type="term" value="F:RNA ligase (ATP) activity"/>
    <property type="evidence" value="ECO:0007669"/>
    <property type="project" value="TreeGrafter"/>
</dbReference>
<dbReference type="GO" id="GO:0170057">
    <property type="term" value="F:RNA ligase (GTP) activity"/>
    <property type="evidence" value="ECO:0007669"/>
    <property type="project" value="UniProtKB-EC"/>
</dbReference>
<dbReference type="GO" id="GO:0006388">
    <property type="term" value="P:tRNA splicing, via endonucleolytic cleavage and ligation"/>
    <property type="evidence" value="ECO:0007669"/>
    <property type="project" value="UniProtKB-UniRule"/>
</dbReference>
<dbReference type="FunFam" id="3.90.1860.10:FF:000001">
    <property type="entry name" value="tRNA-splicing ligase RtcB homolog"/>
    <property type="match status" value="1"/>
</dbReference>
<dbReference type="Gene3D" id="3.90.1860.10">
    <property type="entry name" value="tRNA-splicing ligase RtcB"/>
    <property type="match status" value="1"/>
</dbReference>
<dbReference type="HAMAP" id="MF_03144">
    <property type="entry name" value="RtcB_euk"/>
    <property type="match status" value="1"/>
</dbReference>
<dbReference type="InterPro" id="IPR001233">
    <property type="entry name" value="RtcB"/>
</dbReference>
<dbReference type="InterPro" id="IPR036025">
    <property type="entry name" value="RtcB-like_sf"/>
</dbReference>
<dbReference type="InterPro" id="IPR027513">
    <property type="entry name" value="RtcB_euk"/>
</dbReference>
<dbReference type="PANTHER" id="PTHR11118">
    <property type="entry name" value="RNA-SPLICING LIGASE RTCB HOMOLOG"/>
    <property type="match status" value="1"/>
</dbReference>
<dbReference type="PANTHER" id="PTHR11118:SF1">
    <property type="entry name" value="RNA-SPLICING LIGASE RTCB HOMOLOG"/>
    <property type="match status" value="1"/>
</dbReference>
<dbReference type="Pfam" id="PF01139">
    <property type="entry name" value="RtcB"/>
    <property type="match status" value="1"/>
</dbReference>
<dbReference type="SUPFAM" id="SSF103365">
    <property type="entry name" value="Hypothetical protein PH1602"/>
    <property type="match status" value="1"/>
</dbReference>
<gene>
    <name type="ORF">PKH_090290</name>
</gene>
<accession>B3L4K9</accession>
<sequence>MKQGSRSEGARGDIRGYIQKTGERNLYRIKKGLVPNMNVEGHMYVNDKLKHLIDDEIEMYQLNRNSTFLPAVVQIANVSTLPGIVKASIALPDVHAGYGFSIGNVAAFDMSNEKAIISPGGVGFDINCGVRLIRTNLFYEDIKDKQDELAQLLFNNIPVGVGSQGCILCNQDKLDEALCLGMDWCVKEGYAWVEDKLNCEDNGRSFYADSNYVSVRAKKRGITQMGTLGAGNHYAEIQIVDEIYDKRSAKLMGIEKKNQVCIMIHSGSRGLGHQIATDALIEMEKSMTKYKIDVIDKQLACTPIHSKEGQNYLKAMGSACNFAWINRSSMTFLARQTFAKIFNQSPDDLDMHVIYDISHNIAKMEDHLVDGKMKKLLVHRKGSTRAFPPFHPAVPLDYQYCGQPILIGGTMGTYSYVLTGTDKAMETTFGSTCHGAGRALSRNKSRNTLNYMDVLQKMKEENISIRVASPKLIMEEAPESYKNVSEVVNTCHEAGISNKCFRLKPVAVIKG</sequence>
<feature type="chain" id="PRO_0000407240" description="RNA-splicing ligase RtcB homolog">
    <location>
        <begin position="1"/>
        <end position="511"/>
    </location>
</feature>
<feature type="active site" description="GMP-histidine intermediate" evidence="1">
    <location>
        <position position="434"/>
    </location>
</feature>
<feature type="binding site" evidence="1">
    <location>
        <position position="125"/>
    </location>
    <ligand>
        <name>Mn(2+)</name>
        <dbReference type="ChEBI" id="CHEBI:29035"/>
        <label>1</label>
    </ligand>
</feature>
<feature type="binding site" evidence="1">
    <location>
        <position position="128"/>
    </location>
    <ligand>
        <name>Mn(2+)</name>
        <dbReference type="ChEBI" id="CHEBI:29035"/>
        <label>1</label>
    </ligand>
</feature>
<feature type="binding site" evidence="1">
    <location>
        <position position="128"/>
    </location>
    <ligand>
        <name>Mn(2+)</name>
        <dbReference type="ChEBI" id="CHEBI:29035"/>
        <label>2</label>
    </ligand>
</feature>
<feature type="binding site" evidence="1">
    <location>
        <begin position="232"/>
        <end position="236"/>
    </location>
    <ligand>
        <name>GMP</name>
        <dbReference type="ChEBI" id="CHEBI:58115"/>
    </ligand>
</feature>
<feature type="binding site" evidence="1">
    <location>
        <position position="233"/>
    </location>
    <ligand>
        <name>Mn(2+)</name>
        <dbReference type="ChEBI" id="CHEBI:29035"/>
        <label>1</label>
    </ligand>
</feature>
<feature type="binding site" evidence="1">
    <location>
        <position position="265"/>
    </location>
    <ligand>
        <name>Mn(2+)</name>
        <dbReference type="ChEBI" id="CHEBI:29035"/>
        <label>2</label>
    </ligand>
</feature>
<feature type="binding site" evidence="1">
    <location>
        <begin position="359"/>
        <end position="360"/>
    </location>
    <ligand>
        <name>GMP</name>
        <dbReference type="ChEBI" id="CHEBI:58115"/>
    </ligand>
</feature>
<feature type="binding site" evidence="1">
    <location>
        <position position="359"/>
    </location>
    <ligand>
        <name>Mn(2+)</name>
        <dbReference type="ChEBI" id="CHEBI:29035"/>
        <label>2</label>
    </ligand>
</feature>
<feature type="binding site" evidence="1">
    <location>
        <begin position="408"/>
        <end position="411"/>
    </location>
    <ligand>
        <name>GMP</name>
        <dbReference type="ChEBI" id="CHEBI:58115"/>
    </ligand>
</feature>
<feature type="binding site" evidence="1">
    <location>
        <position position="415"/>
    </location>
    <ligand>
        <name>GMP</name>
        <dbReference type="ChEBI" id="CHEBI:58115"/>
    </ligand>
</feature>
<feature type="binding site" evidence="1">
    <location>
        <begin position="434"/>
        <end position="437"/>
    </location>
    <ligand>
        <name>GMP</name>
        <dbReference type="ChEBI" id="CHEBI:58115"/>
    </ligand>
</feature>
<feature type="binding site" evidence="1">
    <location>
        <position position="510"/>
    </location>
    <ligand>
        <name>GMP</name>
        <dbReference type="ChEBI" id="CHEBI:58115"/>
    </ligand>
</feature>
<name>RTCB_PLAKH</name>
<organism>
    <name type="scientific">Plasmodium knowlesi (strain H)</name>
    <dbReference type="NCBI Taxonomy" id="5851"/>
    <lineage>
        <taxon>Eukaryota</taxon>
        <taxon>Sar</taxon>
        <taxon>Alveolata</taxon>
        <taxon>Apicomplexa</taxon>
        <taxon>Aconoidasida</taxon>
        <taxon>Haemosporida</taxon>
        <taxon>Plasmodiidae</taxon>
        <taxon>Plasmodium</taxon>
        <taxon>Plasmodium (Plasmodium)</taxon>
    </lineage>
</organism>